<organism>
    <name type="scientific">Saccharolobus shibatae (strain ATCC 51178 / DSM 5389 / JCM 8931 / NBRC 15437 / B12)</name>
    <name type="common">Sulfolobus shibatae</name>
    <dbReference type="NCBI Taxonomy" id="523848"/>
    <lineage>
        <taxon>Archaea</taxon>
        <taxon>Thermoproteota</taxon>
        <taxon>Thermoprotei</taxon>
        <taxon>Sulfolobales</taxon>
        <taxon>Sulfolobaceae</taxon>
        <taxon>Saccharolobus</taxon>
    </lineage>
</organism>
<keyword id="KW-0235">DNA replication</keyword>
<keyword id="KW-0238">DNA-binding</keyword>
<keyword id="KW-0239">DNA-directed DNA polymerase</keyword>
<keyword id="KW-0548">Nucleotidyltransferase</keyword>
<keyword id="KW-0808">Transferase</keyword>
<gene>
    <name type="primary">dpo3</name>
    <name evidence="2" type="ORF">J5U23_00168</name>
</gene>
<dbReference type="EC" id="2.7.7.7"/>
<dbReference type="EMBL" id="U92874">
    <property type="protein sequence ID" value="AAB53089.1"/>
    <property type="molecule type" value="Genomic_DNA"/>
</dbReference>
<dbReference type="EMBL" id="CP077717">
    <property type="protein sequence ID" value="QXJ27304.1"/>
    <property type="molecule type" value="Genomic_DNA"/>
</dbReference>
<dbReference type="SMR" id="O05706"/>
<dbReference type="KEGG" id="sshi:J5U23_00168"/>
<dbReference type="OrthoDB" id="323192at2157"/>
<dbReference type="Proteomes" id="UP000694018">
    <property type="component" value="Chromosome"/>
</dbReference>
<dbReference type="GO" id="GO:0003677">
    <property type="term" value="F:DNA binding"/>
    <property type="evidence" value="ECO:0007669"/>
    <property type="project" value="UniProtKB-KW"/>
</dbReference>
<dbReference type="GO" id="GO:0003887">
    <property type="term" value="F:DNA-directed DNA polymerase activity"/>
    <property type="evidence" value="ECO:0007669"/>
    <property type="project" value="UniProtKB-KW"/>
</dbReference>
<dbReference type="GO" id="GO:0000166">
    <property type="term" value="F:nucleotide binding"/>
    <property type="evidence" value="ECO:0007669"/>
    <property type="project" value="InterPro"/>
</dbReference>
<dbReference type="GO" id="GO:0006261">
    <property type="term" value="P:DNA-templated DNA replication"/>
    <property type="evidence" value="ECO:0007669"/>
    <property type="project" value="TreeGrafter"/>
</dbReference>
<dbReference type="CDD" id="cd05781">
    <property type="entry name" value="DNA_polB_B3_exo"/>
    <property type="match status" value="1"/>
</dbReference>
<dbReference type="FunFam" id="3.30.420.10:FF:000273">
    <property type="entry name" value="DNA polymerase 3"/>
    <property type="match status" value="1"/>
</dbReference>
<dbReference type="Gene3D" id="1.10.132.60">
    <property type="entry name" value="DNA polymerase family B, C-terminal domain"/>
    <property type="match status" value="1"/>
</dbReference>
<dbReference type="Gene3D" id="3.30.342.10">
    <property type="entry name" value="DNA Polymerase, chain B, domain 1"/>
    <property type="match status" value="1"/>
</dbReference>
<dbReference type="Gene3D" id="3.90.1600.10">
    <property type="entry name" value="Palm domain of DNA polymerase"/>
    <property type="match status" value="1"/>
</dbReference>
<dbReference type="Gene3D" id="3.30.420.10">
    <property type="entry name" value="Ribonuclease H-like superfamily/Ribonuclease H"/>
    <property type="match status" value="1"/>
</dbReference>
<dbReference type="InterPro" id="IPR006172">
    <property type="entry name" value="DNA-dir_DNA_pol_B"/>
</dbReference>
<dbReference type="InterPro" id="IPR006133">
    <property type="entry name" value="DNA-dir_DNA_pol_B_exonuc"/>
</dbReference>
<dbReference type="InterPro" id="IPR006134">
    <property type="entry name" value="DNA-dir_DNA_pol_B_multi_dom"/>
</dbReference>
<dbReference type="InterPro" id="IPR043502">
    <property type="entry name" value="DNA/RNA_pol_sf"/>
</dbReference>
<dbReference type="InterPro" id="IPR042087">
    <property type="entry name" value="DNA_pol_B_thumb"/>
</dbReference>
<dbReference type="InterPro" id="IPR023211">
    <property type="entry name" value="DNA_pol_palm_dom_sf"/>
</dbReference>
<dbReference type="InterPro" id="IPR050240">
    <property type="entry name" value="DNA_pol_type-B"/>
</dbReference>
<dbReference type="InterPro" id="IPR012337">
    <property type="entry name" value="RNaseH-like_sf"/>
</dbReference>
<dbReference type="InterPro" id="IPR036397">
    <property type="entry name" value="RNaseH_sf"/>
</dbReference>
<dbReference type="PANTHER" id="PTHR10322">
    <property type="entry name" value="DNA POLYMERASE CATALYTIC SUBUNIT"/>
    <property type="match status" value="1"/>
</dbReference>
<dbReference type="PANTHER" id="PTHR10322:SF23">
    <property type="entry name" value="DNA POLYMERASE DELTA CATALYTIC SUBUNIT"/>
    <property type="match status" value="1"/>
</dbReference>
<dbReference type="Pfam" id="PF00136">
    <property type="entry name" value="DNA_pol_B"/>
    <property type="match status" value="2"/>
</dbReference>
<dbReference type="Pfam" id="PF03104">
    <property type="entry name" value="DNA_pol_B_exo1"/>
    <property type="match status" value="1"/>
</dbReference>
<dbReference type="SMART" id="SM00486">
    <property type="entry name" value="POLBc"/>
    <property type="match status" value="1"/>
</dbReference>
<dbReference type="SUPFAM" id="SSF56672">
    <property type="entry name" value="DNA/RNA polymerases"/>
    <property type="match status" value="1"/>
</dbReference>
<dbReference type="SUPFAM" id="SSF53098">
    <property type="entry name" value="Ribonuclease H-like"/>
    <property type="match status" value="1"/>
</dbReference>
<sequence>MIKDFFILDFSYEIKDNIPLIYIWSIDDEGNSCVVVERNFKPYFYVVYEGNGDEIIENIRKNCEVLLITKVKRKYLGNVVDALLVQTFTPTQIKRCREKISRINGIKSIFDADIRFTMRYSIDFDLRPFTWFKAEVSEVKLEGFRAKKVYILDKILSHYEGKIPELRAIGIDFQIYSKYGSLNPRKDPIVVLSLWSKEGSMQFSLDESMDDLKIIRKFVDYILNYDPDIIYVFDVDVFHWKYITERANSLGVKIDIGRKIGSEVSQGTYGHYSISGRLNVDLVGLLMNERLTGHIDLIEVANYLGISPKRDSLNWYEISRYWDDEKNRDLVKQYSLENAKSIYLLGNFLLSPYSELVKIIGLPLDKLSVASWGNRIEASLIRTAAKSEELIPIRMDNPNRSSKIKKTVIEPKIGIYSDVYVLDISSVYLSVIRKFNISPDTLVKGQCDDCYVSTISNYKFKKEPSGLYKTFLEELSNIQDTRKSKVIEELMSSFYDYIHWINSRWYSREIASAVDELSYEIGKLVIDLIKNSGFEVILANDFLVFVKGGSGDKLNELIFKINSLYDLNLKVRKIYRSLLILGNDRYAGLLEGDKIDIARIGKEDRDLCELVRNVKRKVVEEILISKDVKKAVKLVKSAVIKLRRGEFDIGELITWVHIEKDFSEYDKQLPFVVAARKAIQSGYLISKDSRIGYLIVKGHGSVHDRAEPFFFVKEKNRIDIEYYVDQLLRESLKVLTPLGVSEESLKKTNITDILDMFGASKKK</sequence>
<protein>
    <recommendedName>
        <fullName>DNA polymerase 3</fullName>
        <ecNumber>2.7.7.7</ecNumber>
    </recommendedName>
    <alternativeName>
        <fullName>DNA polymerase B3</fullName>
    </alternativeName>
    <alternativeName>
        <fullName>DNA polymerase III</fullName>
    </alternativeName>
</protein>
<feature type="chain" id="PRO_0000046485" description="DNA polymerase 3">
    <location>
        <begin position="1"/>
        <end position="763"/>
    </location>
</feature>
<reference key="1">
    <citation type="journal article" date="1997" name="J. Bacteriol.">
        <title>Gene duplications in evolution of archaeal family B DNA polymerases.</title>
        <authorList>
            <person name="Edgell D.R."/>
            <person name="Klenk H.-P."/>
            <person name="Doolittle W.F."/>
        </authorList>
    </citation>
    <scope>NUCLEOTIDE SEQUENCE [GENOMIC DNA]</scope>
</reference>
<reference evidence="2" key="2">
    <citation type="journal article" date="2021" name="Environ. Microbiol.">
        <title>New insights into the diversity and evolution of the archaeal mobilome from three complete genomes of Saccharolobus shibatae.</title>
        <authorList>
            <person name="Medvedeva S."/>
            <person name="Brandt D."/>
            <person name="Cvirkaite-Krupovic V."/>
            <person name="Liu Y."/>
            <person name="Severinov K."/>
            <person name="Ishino S."/>
            <person name="Ishino Y."/>
            <person name="Prangishvili D."/>
            <person name="Kalinowski J."/>
            <person name="Krupovic M."/>
        </authorList>
    </citation>
    <scope>NUCLEOTIDE SEQUENCE [LARGE SCALE GENOMIC DNA]</scope>
    <source>
        <strain>ATCC 51178 / DSM 5389 / JCM 8931 / NBRC 15437 / B12</strain>
    </source>
</reference>
<evidence type="ECO:0000305" key="1"/>
<evidence type="ECO:0000312" key="2">
    <source>
        <dbReference type="EMBL" id="QXJ27304.1"/>
    </source>
</evidence>
<accession>O05706</accession>
<accession>A0A8F5BL42</accession>
<proteinExistence type="inferred from homology"/>
<name>DPOL3_SACSH</name>
<comment type="catalytic activity">
    <reaction>
        <text>DNA(n) + a 2'-deoxyribonucleoside 5'-triphosphate = DNA(n+1) + diphosphate</text>
        <dbReference type="Rhea" id="RHEA:22508"/>
        <dbReference type="Rhea" id="RHEA-COMP:17339"/>
        <dbReference type="Rhea" id="RHEA-COMP:17340"/>
        <dbReference type="ChEBI" id="CHEBI:33019"/>
        <dbReference type="ChEBI" id="CHEBI:61560"/>
        <dbReference type="ChEBI" id="CHEBI:173112"/>
        <dbReference type="EC" id="2.7.7.7"/>
    </reaction>
</comment>
<comment type="similarity">
    <text evidence="1">Belongs to the DNA polymerase type-B family.</text>
</comment>